<accession>Q0TU56</accession>
<accession>P30818</accession>
<organism>
    <name type="scientific">Clostridium perfringens (strain ATCC 13124 / DSM 756 / JCM 1290 / NCIMB 6125 / NCTC 8237 / Type A)</name>
    <dbReference type="NCBI Taxonomy" id="195103"/>
    <lineage>
        <taxon>Bacteria</taxon>
        <taxon>Bacillati</taxon>
        <taxon>Bacillota</taxon>
        <taxon>Clostridia</taxon>
        <taxon>Eubacteriales</taxon>
        <taxon>Clostridiaceae</taxon>
        <taxon>Clostridium</taxon>
    </lineage>
</organism>
<sequence length="481" mass="52759">MNDNKKLGVIALAGVVISAMLGGGVYNLPQNMAQSASAGAILISWIITGIGIWFIANTFRILAAARPDATTGIYTYGELGFGKFTGFLMAWGYWICNSFANVGYAVLLMDSLNYFFPPYFKGGNNWLSIACGSLVLWIIFFIVLAGVKQASALNVIGTIGKLLPLAIFLLVLLFSFRFSTFFTDFWGLKTVAKVHDTNLGGILPQVKSTMLVTLWVFTGIEGAVVVSGRAKSQKDVSKATFLGFITCLLIYTLLSLLPLGVYSQGEISKMAPPSTAAVLMDLIGNWGSVIMNLGVIIAILSSWLIWTVMLSELPFAAAQSGTFPKIFAKENKNESPSFSLLASTIIMQIILILVHFAGNAWNMMLSITSVMALPCYLVSTLYLFKITYKNENYPTDIFAKRKYAMITAILGSIYGVWLIYAAGINYMLIAIVIYALGIPVFIKARRETSPNEKEFTKVERYFAIVLIILALIGLVYLFKFM</sequence>
<feature type="chain" id="PRO_0000259457" description="Putative amino-acid transporter CPF_0377">
    <location>
        <begin position="1"/>
        <end position="481"/>
    </location>
</feature>
<feature type="transmembrane region" description="Helical" evidence="1">
    <location>
        <begin position="7"/>
        <end position="27"/>
    </location>
</feature>
<feature type="transmembrane region" description="Helical" evidence="1">
    <location>
        <begin position="36"/>
        <end position="56"/>
    </location>
</feature>
<feature type="transmembrane region" description="Helical" evidence="1">
    <location>
        <begin position="87"/>
        <end position="107"/>
    </location>
</feature>
<feature type="transmembrane region" description="Helical" evidence="1">
    <location>
        <begin position="127"/>
        <end position="147"/>
    </location>
</feature>
<feature type="transmembrane region" description="Helical" evidence="1">
    <location>
        <begin position="156"/>
        <end position="176"/>
    </location>
</feature>
<feature type="transmembrane region" description="Helical" evidence="1">
    <location>
        <begin position="208"/>
        <end position="228"/>
    </location>
</feature>
<feature type="transmembrane region" description="Helical" evidence="1">
    <location>
        <begin position="241"/>
        <end position="261"/>
    </location>
</feature>
<feature type="transmembrane region" description="Helical" evidence="1">
    <location>
        <begin position="289"/>
        <end position="309"/>
    </location>
</feature>
<feature type="transmembrane region" description="Helical" evidence="1">
    <location>
        <begin position="338"/>
        <end position="358"/>
    </location>
</feature>
<feature type="transmembrane region" description="Helical" evidence="1">
    <location>
        <begin position="364"/>
        <end position="384"/>
    </location>
</feature>
<feature type="transmembrane region" description="Helical" evidence="1">
    <location>
        <begin position="401"/>
        <end position="421"/>
    </location>
</feature>
<feature type="transmembrane region" description="Helical" evidence="1">
    <location>
        <begin position="422"/>
        <end position="442"/>
    </location>
</feature>
<feature type="transmembrane region" description="Helical" evidence="1">
    <location>
        <begin position="461"/>
        <end position="481"/>
    </location>
</feature>
<protein>
    <recommendedName>
        <fullName>Putative amino-acid transporter CPF_0377</fullName>
    </recommendedName>
</protein>
<dbReference type="EMBL" id="CP000246">
    <property type="protein sequence ID" value="ABG83796.1"/>
    <property type="molecule type" value="Genomic_DNA"/>
</dbReference>
<dbReference type="EMBL" id="J02880">
    <property type="protein sequence ID" value="AAA83527.1"/>
    <property type="molecule type" value="Genomic_DNA"/>
</dbReference>
<dbReference type="PIR" id="B33770">
    <property type="entry name" value="B33770"/>
</dbReference>
<dbReference type="RefSeq" id="WP_003455623.1">
    <property type="nucleotide sequence ID" value="NC_008261.1"/>
</dbReference>
<dbReference type="SMR" id="Q0TU56"/>
<dbReference type="STRING" id="195103.CPF_0377"/>
<dbReference type="PaxDb" id="195103-CPF_0377"/>
<dbReference type="KEGG" id="cpf:CPF_0377"/>
<dbReference type="eggNOG" id="COG0531">
    <property type="taxonomic scope" value="Bacteria"/>
</dbReference>
<dbReference type="HOGENOM" id="CLU_007946_1_2_9"/>
<dbReference type="Proteomes" id="UP000001823">
    <property type="component" value="Chromosome"/>
</dbReference>
<dbReference type="GO" id="GO:0005886">
    <property type="term" value="C:plasma membrane"/>
    <property type="evidence" value="ECO:0007669"/>
    <property type="project" value="UniProtKB-SubCell"/>
</dbReference>
<dbReference type="GO" id="GO:0022857">
    <property type="term" value="F:transmembrane transporter activity"/>
    <property type="evidence" value="ECO:0007669"/>
    <property type="project" value="InterPro"/>
</dbReference>
<dbReference type="GO" id="GO:0006865">
    <property type="term" value="P:amino acid transport"/>
    <property type="evidence" value="ECO:0007669"/>
    <property type="project" value="UniProtKB-KW"/>
</dbReference>
<dbReference type="Gene3D" id="1.20.1740.10">
    <property type="entry name" value="Amino acid/polyamine transporter I"/>
    <property type="match status" value="1"/>
</dbReference>
<dbReference type="InterPro" id="IPR002293">
    <property type="entry name" value="AA/rel_permease1"/>
</dbReference>
<dbReference type="InterPro" id="IPR004754">
    <property type="entry name" value="Amino_acid_antiprt"/>
</dbReference>
<dbReference type="InterPro" id="IPR050367">
    <property type="entry name" value="APC_superfamily"/>
</dbReference>
<dbReference type="NCBIfam" id="TIGR00905">
    <property type="entry name" value="2A0302"/>
    <property type="match status" value="1"/>
</dbReference>
<dbReference type="PANTHER" id="PTHR42770">
    <property type="entry name" value="AMINO ACID TRANSPORTER-RELATED"/>
    <property type="match status" value="1"/>
</dbReference>
<dbReference type="PANTHER" id="PTHR42770:SF4">
    <property type="entry name" value="ARGININE_ORNITHINE ANTIPORTER-RELATED"/>
    <property type="match status" value="1"/>
</dbReference>
<dbReference type="Pfam" id="PF13520">
    <property type="entry name" value="AA_permease_2"/>
    <property type="match status" value="1"/>
</dbReference>
<dbReference type="PIRSF" id="PIRSF006060">
    <property type="entry name" value="AA_transporter"/>
    <property type="match status" value="1"/>
</dbReference>
<proteinExistence type="inferred from homology"/>
<name>Y377_CLOP1</name>
<reference key="1">
    <citation type="journal article" date="2006" name="Genome Res.">
        <title>Skewed genomic variability in strains of the toxigenic bacterial pathogen, Clostridium perfringens.</title>
        <authorList>
            <person name="Myers G.S.A."/>
            <person name="Rasko D.A."/>
            <person name="Cheung J.K."/>
            <person name="Ravel J."/>
            <person name="Seshadri R."/>
            <person name="DeBoy R.T."/>
            <person name="Ren Q."/>
            <person name="Varga J."/>
            <person name="Awad M.M."/>
            <person name="Brinkac L.M."/>
            <person name="Daugherty S.C."/>
            <person name="Haft D.H."/>
            <person name="Dodson R.J."/>
            <person name="Madupu R."/>
            <person name="Nelson W.C."/>
            <person name="Rosovitz M.J."/>
            <person name="Sullivan S.A."/>
            <person name="Khouri H."/>
            <person name="Dimitrov G.I."/>
            <person name="Watkins K.L."/>
            <person name="Mulligan S."/>
            <person name="Benton J."/>
            <person name="Radune D."/>
            <person name="Fisher D.J."/>
            <person name="Atkins H.S."/>
            <person name="Hiscox T."/>
            <person name="Jost B.H."/>
            <person name="Billington S.J."/>
            <person name="Songer J.G."/>
            <person name="McClane B.A."/>
            <person name="Titball R.W."/>
            <person name="Rood J.I."/>
            <person name="Melville S.B."/>
            <person name="Paulsen I.T."/>
        </authorList>
    </citation>
    <scope>NUCLEOTIDE SEQUENCE [LARGE SCALE GENOMIC DNA]</scope>
    <source>
        <strain>ATCC 13124 / DSM 756 / JCM 1290 / NCIMB 6125 / NCTC 8237 / S 107 / Type A</strain>
    </source>
</reference>
<reference key="2">
    <citation type="journal article" date="1990" name="Biochemistry">
        <title>Cloning, sequencing, expression, and site-directed mutagenesis of the gene from Clostridium perfringens encoding pyruvoyl-dependent histidine decarboxylase.</title>
        <authorList>
            <person name="van Poelje P.D."/>
            <person name="Snell E.E."/>
        </authorList>
    </citation>
    <scope>NUCLEOTIDE SEQUENCE [GENOMIC DNA] OF 1-35</scope>
</reference>
<comment type="function">
    <text>Could be an amino acid transporter.</text>
</comment>
<comment type="subcellular location">
    <subcellularLocation>
        <location>Cell membrane</location>
        <topology>Multi-pass membrane protein</topology>
    </subcellularLocation>
</comment>
<comment type="similarity">
    <text evidence="2">Belongs to the amino acid-polyamine-organocation (APC) superfamily. Basic amino acid/polyamine antiporter (APA) (TC 2.A.3.2) family.</text>
</comment>
<gene>
    <name type="ordered locus">CPF_0377</name>
</gene>
<keyword id="KW-0029">Amino-acid transport</keyword>
<keyword id="KW-1003">Cell membrane</keyword>
<keyword id="KW-0472">Membrane</keyword>
<keyword id="KW-0812">Transmembrane</keyword>
<keyword id="KW-1133">Transmembrane helix</keyword>
<keyword id="KW-0813">Transport</keyword>
<evidence type="ECO:0000255" key="1"/>
<evidence type="ECO:0000305" key="2"/>